<reference key="1">
    <citation type="submission" date="1996-11" db="EMBL/GenBank/DDBJ databases">
        <title>The 10.7 kb 'nonessential' region of bacteriophage T4 between the genes tk and nrdC: twenty new t4 genes, generally conserved among T-even phages.</title>
        <authorList>
            <person name="Mzhavia N."/>
            <person name="Marusich E."/>
            <person name="Djavakhishvili T."/>
            <person name="Neitzel J."/>
            <person name="Peterson S."/>
            <person name="Awaya M."/>
            <person name="Eidermiller J."/>
            <person name="Canada D."/>
            <person name="Tracy J."/>
            <person name="Gailbreath K."/>
            <person name="Paddison P."/>
            <person name="Anderson B."/>
            <person name="Stidham T."/>
            <person name="Blattner F."/>
            <person name="Kutter E.M."/>
        </authorList>
    </citation>
    <scope>NUCLEOTIDE SEQUENCE [GENOMIC DNA]</scope>
</reference>
<reference key="2">
    <citation type="journal article" date="2003" name="Microbiol. Mol. Biol. Rev.">
        <title>Bacteriophage T4 genome.</title>
        <authorList>
            <person name="Miller E.S."/>
            <person name="Kutter E."/>
            <person name="Mosig G."/>
            <person name="Arisaka F."/>
            <person name="Kunisawa T."/>
            <person name="Ruger W."/>
        </authorList>
    </citation>
    <scope>NUCLEOTIDE SEQUENCE [LARGE SCALE GENOMIC DNA]</scope>
</reference>
<gene>
    <name type="primary">y04P</name>
    <name type="synonym">nrdC.4</name>
</gene>
<proteinExistence type="predicted"/>
<name>Y04P_BPT4</name>
<organismHost>
    <name type="scientific">Escherichia coli</name>
    <dbReference type="NCBI Taxonomy" id="562"/>
</organismHost>
<feature type="chain" id="PRO_0000165118" description="Uncharacterized 39.0 kDa protein in nrdC-mobD intergenic region">
    <location>
        <begin position="1"/>
        <end position="333"/>
    </location>
</feature>
<keyword id="KW-1185">Reference proteome</keyword>
<dbReference type="EMBL" id="U76612">
    <property type="protein sequence ID" value="AAB26978.1"/>
    <property type="molecule type" value="Genomic_DNA"/>
</dbReference>
<dbReference type="EMBL" id="AF158101">
    <property type="protein sequence ID" value="AAD42632.1"/>
    <property type="molecule type" value="Genomic_DNA"/>
</dbReference>
<dbReference type="RefSeq" id="NP_049702.1">
    <property type="nucleotide sequence ID" value="NC_000866.4"/>
</dbReference>
<dbReference type="SMR" id="P39255"/>
<dbReference type="GeneID" id="1258539"/>
<dbReference type="KEGG" id="vg:1258539"/>
<dbReference type="OrthoDB" id="5204at10239"/>
<dbReference type="Proteomes" id="UP000009087">
    <property type="component" value="Segment"/>
</dbReference>
<protein>
    <recommendedName>
        <fullName>Uncharacterized 39.0 kDa protein in nrdC-mobD intergenic region</fullName>
    </recommendedName>
</protein>
<accession>P39255</accession>
<organism>
    <name type="scientific">Enterobacteria phage T4</name>
    <name type="common">Bacteriophage T4</name>
    <dbReference type="NCBI Taxonomy" id="10665"/>
    <lineage>
        <taxon>Viruses</taxon>
        <taxon>Duplodnaviria</taxon>
        <taxon>Heunggongvirae</taxon>
        <taxon>Uroviricota</taxon>
        <taxon>Caudoviricetes</taxon>
        <taxon>Straboviridae</taxon>
        <taxon>Tevenvirinae</taxon>
        <taxon>Tequatrovirus</taxon>
    </lineage>
</organism>
<sequence>MTRNEYIKSFNSVIDDKAIPMFGQNSVLSIINQWLNSVDASIVSSTKFIHEIRKISSRVDKDVIKKTFKESRLLSYLVNRDILGNFGKEIKRTKDVVGYNWFGDVNSYHLNNKEDPENIFTRRWISNFRLFKKQILKSASKLCYGDYRQIHPLASDMIIIKEYELDKNKVSIFVNYGFFTPETNQKNINKFFSIASTITRQLETALLCMETVENIHTYPFKNICGWEGYKLVISLREVKCAYSPTSKEIYQQKCDEIVNTPKEETTLEELMECLDDSPEPIEIRPEVIALEKAYKEVLEISNKAQKEYEQAKKIWEESVNRLDRLEQALQLIK</sequence>